<gene>
    <name type="primary">RABA5C</name>
    <name type="synonym">ARA-4</name>
    <name type="synonym">RAB11F</name>
    <name type="ordered locus">At2g43130</name>
    <name type="ORF">F14B2.7</name>
</gene>
<comment type="function">
    <text evidence="6">Intracellular vesicle trafficking and protein transport. Binds GTP and GDP and possesses intrinsic GTPase activity.</text>
</comment>
<comment type="subunit">
    <text evidence="3">Interacts (via C-terminus) with GDI1. Interacts with PUX8/SAY1.</text>
</comment>
<comment type="subcellular location">
    <subcellularLocation>
        <location evidence="4 7">Golgi apparatus membrane</location>
        <topology evidence="8">Lipid-anchor</topology>
    </subcellularLocation>
    <subcellularLocation>
        <location evidence="7">Golgi apparatus</location>
        <location evidence="7">trans-Golgi network membrane</location>
        <topology evidence="8">Lipid-anchor</topology>
    </subcellularLocation>
    <subcellularLocation>
        <location evidence="8">Cell membrane</location>
        <topology evidence="8">Lipid-anchor</topology>
    </subcellularLocation>
</comment>
<comment type="tissue specificity">
    <text evidence="4">Expressed in roots and actively dividing cells.</text>
</comment>
<comment type="induction">
    <text evidence="2 5">By abscisic acid (ABA), phosphate (Pi) deprivation, cold, sucrose, mannose, and water stress.</text>
</comment>
<comment type="similarity">
    <text evidence="8">Belongs to the small GTPase superfamily. Rab family.</text>
</comment>
<evidence type="ECO:0000250" key="1"/>
<evidence type="ECO:0000269" key="2">
    <source>
    </source>
</evidence>
<evidence type="ECO:0000269" key="3">
    <source>
    </source>
</evidence>
<evidence type="ECO:0000269" key="4">
    <source>
    </source>
</evidence>
<evidence type="ECO:0000269" key="5">
    <source>
    </source>
</evidence>
<evidence type="ECO:0000269" key="6">
    <source>
    </source>
</evidence>
<evidence type="ECO:0000269" key="7">
    <source>
    </source>
</evidence>
<evidence type="ECO:0000305" key="8"/>
<organism>
    <name type="scientific">Arabidopsis thaliana</name>
    <name type="common">Mouse-ear cress</name>
    <dbReference type="NCBI Taxonomy" id="3702"/>
    <lineage>
        <taxon>Eukaryota</taxon>
        <taxon>Viridiplantae</taxon>
        <taxon>Streptophyta</taxon>
        <taxon>Embryophyta</taxon>
        <taxon>Tracheophyta</taxon>
        <taxon>Spermatophyta</taxon>
        <taxon>Magnoliopsida</taxon>
        <taxon>eudicotyledons</taxon>
        <taxon>Gunneridae</taxon>
        <taxon>Pentapetalae</taxon>
        <taxon>rosids</taxon>
        <taxon>malvids</taxon>
        <taxon>Brassicales</taxon>
        <taxon>Brassicaceae</taxon>
        <taxon>Camelineae</taxon>
        <taxon>Arabidopsis</taxon>
    </lineage>
</organism>
<proteinExistence type="evidence at protein level"/>
<accession>P28187</accession>
<accession>Q1ECF0</accession>
<keyword id="KW-1003">Cell membrane</keyword>
<keyword id="KW-0333">Golgi apparatus</keyword>
<keyword id="KW-0342">GTP-binding</keyword>
<keyword id="KW-0449">Lipoprotein</keyword>
<keyword id="KW-0472">Membrane</keyword>
<keyword id="KW-0547">Nucleotide-binding</keyword>
<keyword id="KW-0636">Prenylation</keyword>
<keyword id="KW-1185">Reference proteome</keyword>
<reference key="1">
    <citation type="journal article" date="1991" name="Gene">
        <title>Isolation and analysis of cDNAs encoding small GTP-binding proteins of Arabidopsis thaliana.</title>
        <authorList>
            <person name="Anai T."/>
            <person name="Hasegawa K."/>
            <person name="Watanabe Y."/>
            <person name="Uchimiya H."/>
            <person name="Ishizaki R."/>
            <person name="Matsui M."/>
        </authorList>
    </citation>
    <scope>NUCLEOTIDE SEQUENCE [MRNA]</scope>
    <source>
        <strain>cv. Columbia</strain>
        <strain>cv. En-1</strain>
        <strain>cv. Est</strain>
        <strain>cv. Landsberg erecta</strain>
        <strain>cv. Lapalmam</strain>
        <tissue>Leaf</tissue>
    </source>
</reference>
<reference key="2">
    <citation type="journal article" date="1999" name="Nature">
        <title>Sequence and analysis of chromosome 2 of the plant Arabidopsis thaliana.</title>
        <authorList>
            <person name="Lin X."/>
            <person name="Kaul S."/>
            <person name="Rounsley S.D."/>
            <person name="Shea T.P."/>
            <person name="Benito M.-I."/>
            <person name="Town C.D."/>
            <person name="Fujii C.Y."/>
            <person name="Mason T.M."/>
            <person name="Bowman C.L."/>
            <person name="Barnstead M.E."/>
            <person name="Feldblyum T.V."/>
            <person name="Buell C.R."/>
            <person name="Ketchum K.A."/>
            <person name="Lee J.J."/>
            <person name="Ronning C.M."/>
            <person name="Koo H.L."/>
            <person name="Moffat K.S."/>
            <person name="Cronin L.A."/>
            <person name="Shen M."/>
            <person name="Pai G."/>
            <person name="Van Aken S."/>
            <person name="Umayam L."/>
            <person name="Tallon L.J."/>
            <person name="Gill J.E."/>
            <person name="Adams M.D."/>
            <person name="Carrera A.J."/>
            <person name="Creasy T.H."/>
            <person name="Goodman H.M."/>
            <person name="Somerville C.R."/>
            <person name="Copenhaver G.P."/>
            <person name="Preuss D."/>
            <person name="Nierman W.C."/>
            <person name="White O."/>
            <person name="Eisen J.A."/>
            <person name="Salzberg S.L."/>
            <person name="Fraser C.M."/>
            <person name="Venter J.C."/>
        </authorList>
    </citation>
    <scope>NUCLEOTIDE SEQUENCE [LARGE SCALE GENOMIC DNA]</scope>
    <source>
        <strain>cv. Columbia</strain>
    </source>
</reference>
<reference key="3">
    <citation type="journal article" date="2017" name="Plant J.">
        <title>Araport11: a complete reannotation of the Arabidopsis thaliana reference genome.</title>
        <authorList>
            <person name="Cheng C.Y."/>
            <person name="Krishnakumar V."/>
            <person name="Chan A.P."/>
            <person name="Thibaud-Nissen F."/>
            <person name="Schobel S."/>
            <person name="Town C.D."/>
        </authorList>
    </citation>
    <scope>GENOME REANNOTATION</scope>
    <source>
        <strain>cv. Columbia</strain>
    </source>
</reference>
<reference key="4">
    <citation type="journal article" date="2009" name="DNA Res.">
        <title>Analysis of multiple occurrences of alternative splicing events in Arabidopsis thaliana using novel sequenced full-length cDNAs.</title>
        <authorList>
            <person name="Iida K."/>
            <person name="Fukami-Kobayashi K."/>
            <person name="Toyoda A."/>
            <person name="Sakaki Y."/>
            <person name="Kobayashi M."/>
            <person name="Seki M."/>
            <person name="Shinozaki K."/>
        </authorList>
    </citation>
    <scope>NUCLEOTIDE SEQUENCE [LARGE SCALE MRNA]</scope>
    <source>
        <strain>cv. Columbia</strain>
    </source>
</reference>
<reference key="5">
    <citation type="submission" date="2006-06" db="EMBL/GenBank/DDBJ databases">
        <title>Arabidopsis ORF clones.</title>
        <authorList>
            <person name="Kim C.J."/>
            <person name="Chen H."/>
            <person name="Quinitio C."/>
            <person name="Shinn P."/>
            <person name="Ecker J.R."/>
        </authorList>
    </citation>
    <scope>NUCLEOTIDE SEQUENCE [LARGE SCALE MRNA]</scope>
    <source>
        <strain>cv. Columbia</strain>
    </source>
</reference>
<reference key="6">
    <citation type="journal article" date="1994" name="FEBS Lett.">
        <title>In vitro mutation analysis of Arabidopsis thaliana small GTP-binding proteins and detection of GAP-like activities in plant cells.</title>
        <authorList>
            <person name="Anai T."/>
            <person name="Matsui M."/>
            <person name="Nomura N."/>
            <person name="Ishizaki R."/>
            <person name="Uchimiya H."/>
        </authorList>
    </citation>
    <scope>FUNCTION</scope>
    <scope>MUTAGENESIS OF GLN-71 AND ASN-125</scope>
</reference>
<reference key="7">
    <citation type="journal article" date="1996" name="Mol. Gen. Genet.">
        <title>Characterization and subcellular localization of a small GTP-binding protein (Ara-4) from Arabidopsis: conditional expression under control of the promoter of the gene for heat-shock protein HSP81-1.</title>
        <authorList>
            <person name="Ueda T."/>
            <person name="Anai T."/>
            <person name="Tsukaya H."/>
            <person name="Hirata A."/>
            <person name="Uchimiya H."/>
        </authorList>
    </citation>
    <scope>SUBCELLULAR LOCATION</scope>
</reference>
<reference key="8">
    <citation type="journal article" date="1999" name="Plant J.">
        <title>Induction of RAB18 gene expression and activation of K+ outward rectifying channels depend on an extracellular perception of ABA in Arabidopsis thaliana suspension cells.</title>
        <authorList>
            <person name="Jeannette E."/>
            <person name="Rona J.P."/>
            <person name="Bardat F."/>
            <person name="Cornel D."/>
            <person name="Sotta B."/>
            <person name="Miginiac E."/>
        </authorList>
    </citation>
    <scope>INDUCTION BY ABSCISIC ACID</scope>
</reference>
<reference key="9">
    <citation type="journal article" date="2000" name="Plant J.">
        <title>Modes of interaction between the Arabidopsis Rab protein, Ara4, and its putative regulator molecules revealed by a yeast expression system.</title>
        <authorList>
            <person name="Ueda T."/>
            <person name="Matsuda N."/>
            <person name="Uchimiya H."/>
            <person name="Nakano A."/>
        </authorList>
    </citation>
    <scope>INTERACTION WITH GDI1 AND PUX8</scope>
</reference>
<reference key="10">
    <citation type="journal article" date="2001" name="EMBO J.">
        <title>Ara6, a plant-unique novel type Rab GTPase, functions in the endocytic pathway of Arabidopsis thaliana.</title>
        <authorList>
            <person name="Ueda T."/>
            <person name="Yamaguchi M."/>
            <person name="Uchimiya H."/>
            <person name="Nakano A."/>
        </authorList>
    </citation>
    <scope>SUBCELLULAR LOCATION</scope>
    <scope>TISSUE SPECIFICITY</scope>
</reference>
<reference key="11">
    <citation type="journal article" date="2002" name="Biochim. Biophys. Acta">
        <title>Effects of phosphate deficiency and sugars on expression of rab18 in Arabidopsis: hexokinase-dependent and okadaic acid-sensitive transduction of the sugar signal.</title>
        <authorList>
            <person name="Ciereszko I."/>
            <person name="Kleczkowski L.A."/>
        </authorList>
    </citation>
    <scope>INDUCTION</scope>
</reference>
<reference key="12">
    <citation type="journal article" date="2003" name="Plant Physiol.">
        <title>Analysis of the small GTPase gene superfamily of Arabidopsis.</title>
        <authorList>
            <person name="Vernoud V."/>
            <person name="Horton A.C."/>
            <person name="Yang Z."/>
            <person name="Nielsen E."/>
        </authorList>
    </citation>
    <scope>GENE FAMILY</scope>
    <scope>NOMENCLATURE</scope>
</reference>
<sequence>MSDDDERGEEYLFKIVIIGDSAVGKSNLLTRYARNEFNPNSKATIGVEFQTQSMLIDGKEVKAQIWDTAGQERFRAVTSAYYRGAVGALVVYDITRSSTFENVGRWLDELNTHSDTTVAKMLIGNKCDLESIRAVSVEEGKSLAESEGLFFMETSALDSTNVKTAFEMVIREIYSNISRKQLNSDSYKEELTVNRVSLVKNENEGTKTFSCCSR</sequence>
<protein>
    <recommendedName>
        <fullName>Ras-related protein RABA5c</fullName>
        <shortName>AtRABA5c</shortName>
    </recommendedName>
    <alternativeName>
        <fullName>Ras-related protein Ara-4</fullName>
    </alternativeName>
    <alternativeName>
        <fullName>Ras-related protein Rab11F</fullName>
        <shortName>AtRab11F</shortName>
    </alternativeName>
</protein>
<dbReference type="EMBL" id="D01026">
    <property type="protein sequence ID" value="BAA00831.1"/>
    <property type="molecule type" value="mRNA"/>
</dbReference>
<dbReference type="EMBL" id="AC004450">
    <property type="protein sequence ID" value="AAC64302.1"/>
    <property type="molecule type" value="Genomic_DNA"/>
</dbReference>
<dbReference type="EMBL" id="CP002685">
    <property type="protein sequence ID" value="AEC10212.1"/>
    <property type="molecule type" value="Genomic_DNA"/>
</dbReference>
<dbReference type="EMBL" id="BT025784">
    <property type="protein sequence ID" value="ABF83674.1"/>
    <property type="molecule type" value="mRNA"/>
</dbReference>
<dbReference type="EMBL" id="AK317205">
    <property type="protein sequence ID" value="BAH19889.1"/>
    <property type="molecule type" value="mRNA"/>
</dbReference>
<dbReference type="PIR" id="JS0641">
    <property type="entry name" value="JS0641"/>
</dbReference>
<dbReference type="RefSeq" id="NP_181842.1">
    <property type="nucleotide sequence ID" value="NM_129875.4"/>
</dbReference>
<dbReference type="SMR" id="P28187"/>
<dbReference type="BioGRID" id="4252">
    <property type="interactions" value="4"/>
</dbReference>
<dbReference type="FunCoup" id="P28187">
    <property type="interactions" value="321"/>
</dbReference>
<dbReference type="IntAct" id="P28187">
    <property type="interactions" value="3"/>
</dbReference>
<dbReference type="STRING" id="3702.P28187"/>
<dbReference type="iPTMnet" id="P28187"/>
<dbReference type="PaxDb" id="3702-AT2G43130.1"/>
<dbReference type="ProteomicsDB" id="236501"/>
<dbReference type="EnsemblPlants" id="AT2G43130.1">
    <property type="protein sequence ID" value="AT2G43130.1"/>
    <property type="gene ID" value="AT2G43130"/>
</dbReference>
<dbReference type="GeneID" id="818915"/>
<dbReference type="Gramene" id="AT2G43130.1">
    <property type="protein sequence ID" value="AT2G43130.1"/>
    <property type="gene ID" value="AT2G43130"/>
</dbReference>
<dbReference type="KEGG" id="ath:AT2G43130"/>
<dbReference type="Araport" id="AT2G43130"/>
<dbReference type="TAIR" id="AT2G43130">
    <property type="gene designation" value="ARA4"/>
</dbReference>
<dbReference type="eggNOG" id="KOG0087">
    <property type="taxonomic scope" value="Eukaryota"/>
</dbReference>
<dbReference type="HOGENOM" id="CLU_041217_23_0_1"/>
<dbReference type="InParanoid" id="P28187"/>
<dbReference type="OMA" id="TNVKMAF"/>
<dbReference type="OrthoDB" id="9989112at2759"/>
<dbReference type="PhylomeDB" id="P28187"/>
<dbReference type="PRO" id="PR:P28187"/>
<dbReference type="Proteomes" id="UP000006548">
    <property type="component" value="Chromosome 2"/>
</dbReference>
<dbReference type="ExpressionAtlas" id="P28187">
    <property type="expression patterns" value="baseline and differential"/>
</dbReference>
<dbReference type="GO" id="GO:0000139">
    <property type="term" value="C:Golgi membrane"/>
    <property type="evidence" value="ECO:0007669"/>
    <property type="project" value="UniProtKB-SubCell"/>
</dbReference>
<dbReference type="GO" id="GO:0005795">
    <property type="term" value="C:Golgi stack"/>
    <property type="evidence" value="ECO:0000314"/>
    <property type="project" value="TAIR"/>
</dbReference>
<dbReference type="GO" id="GO:0005798">
    <property type="term" value="C:Golgi-associated vesicle"/>
    <property type="evidence" value="ECO:0000314"/>
    <property type="project" value="TAIR"/>
</dbReference>
<dbReference type="GO" id="GO:0005886">
    <property type="term" value="C:plasma membrane"/>
    <property type="evidence" value="ECO:0007005"/>
    <property type="project" value="TAIR"/>
</dbReference>
<dbReference type="GO" id="GO:0005802">
    <property type="term" value="C:trans-Golgi network"/>
    <property type="evidence" value="ECO:0000314"/>
    <property type="project" value="TAIR"/>
</dbReference>
<dbReference type="GO" id="GO:0005525">
    <property type="term" value="F:GTP binding"/>
    <property type="evidence" value="ECO:0000314"/>
    <property type="project" value="UniProtKB"/>
</dbReference>
<dbReference type="GO" id="GO:0003924">
    <property type="term" value="F:GTPase activity"/>
    <property type="evidence" value="ECO:0000314"/>
    <property type="project" value="UniProtKB"/>
</dbReference>
<dbReference type="GO" id="GO:0048219">
    <property type="term" value="P:inter-Golgi cisterna vesicle-mediated transport"/>
    <property type="evidence" value="ECO:0000304"/>
    <property type="project" value="TAIR"/>
</dbReference>
<dbReference type="GO" id="GO:0009408">
    <property type="term" value="P:response to heat"/>
    <property type="evidence" value="ECO:0000270"/>
    <property type="project" value="TAIR"/>
</dbReference>
<dbReference type="CDD" id="cd01868">
    <property type="entry name" value="Rab11_like"/>
    <property type="match status" value="1"/>
</dbReference>
<dbReference type="FunFam" id="3.40.50.300:FF:000274">
    <property type="entry name" value="ras-related protein RABA5a"/>
    <property type="match status" value="1"/>
</dbReference>
<dbReference type="Gene3D" id="3.40.50.300">
    <property type="entry name" value="P-loop containing nucleotide triphosphate hydrolases"/>
    <property type="match status" value="1"/>
</dbReference>
<dbReference type="InterPro" id="IPR027417">
    <property type="entry name" value="P-loop_NTPase"/>
</dbReference>
<dbReference type="InterPro" id="IPR050209">
    <property type="entry name" value="Rab_GTPases_membrane_traffic"/>
</dbReference>
<dbReference type="InterPro" id="IPR005225">
    <property type="entry name" value="Small_GTP-bd"/>
</dbReference>
<dbReference type="InterPro" id="IPR001806">
    <property type="entry name" value="Small_GTPase"/>
</dbReference>
<dbReference type="NCBIfam" id="TIGR00231">
    <property type="entry name" value="small_GTP"/>
    <property type="match status" value="1"/>
</dbReference>
<dbReference type="PANTHER" id="PTHR47979">
    <property type="entry name" value="DRAB11-RELATED"/>
    <property type="match status" value="1"/>
</dbReference>
<dbReference type="Pfam" id="PF00071">
    <property type="entry name" value="Ras"/>
    <property type="match status" value="1"/>
</dbReference>
<dbReference type="PRINTS" id="PR00449">
    <property type="entry name" value="RASTRNSFRMNG"/>
</dbReference>
<dbReference type="SMART" id="SM00175">
    <property type="entry name" value="RAB"/>
    <property type="match status" value="1"/>
</dbReference>
<dbReference type="SMART" id="SM00176">
    <property type="entry name" value="RAN"/>
    <property type="match status" value="1"/>
</dbReference>
<dbReference type="SMART" id="SM00173">
    <property type="entry name" value="RAS"/>
    <property type="match status" value="1"/>
</dbReference>
<dbReference type="SMART" id="SM00174">
    <property type="entry name" value="RHO"/>
    <property type="match status" value="1"/>
</dbReference>
<dbReference type="SUPFAM" id="SSF52540">
    <property type="entry name" value="P-loop containing nucleoside triphosphate hydrolases"/>
    <property type="match status" value="1"/>
</dbReference>
<dbReference type="PROSITE" id="PS51419">
    <property type="entry name" value="RAB"/>
    <property type="match status" value="1"/>
</dbReference>
<feature type="chain" id="PRO_0000121291" description="Ras-related protein RABA5c">
    <location>
        <begin position="1"/>
        <end position="214"/>
    </location>
</feature>
<feature type="short sequence motif" description="Effector region" evidence="1">
    <location>
        <begin position="41"/>
        <end position="49"/>
    </location>
</feature>
<feature type="binding site" evidence="1">
    <location>
        <begin position="19"/>
        <end position="26"/>
    </location>
    <ligand>
        <name>GTP</name>
        <dbReference type="ChEBI" id="CHEBI:37565"/>
    </ligand>
</feature>
<feature type="binding site" evidence="1">
    <location>
        <begin position="67"/>
        <end position="71"/>
    </location>
    <ligand>
        <name>GTP</name>
        <dbReference type="ChEBI" id="CHEBI:37565"/>
    </ligand>
</feature>
<feature type="binding site" evidence="1">
    <location>
        <begin position="125"/>
        <end position="128"/>
    </location>
    <ligand>
        <name>GTP</name>
        <dbReference type="ChEBI" id="CHEBI:37565"/>
    </ligand>
</feature>
<feature type="binding site" evidence="1">
    <location>
        <begin position="155"/>
        <end position="156"/>
    </location>
    <ligand>
        <name>GTP</name>
        <dbReference type="ChEBI" id="CHEBI:37565"/>
    </ligand>
</feature>
<feature type="lipid moiety-binding region" description="S-geranylgeranyl cysteine" evidence="1">
    <location>
        <position position="211"/>
    </location>
</feature>
<feature type="lipid moiety-binding region" description="S-geranylgeranyl cysteine" evidence="1">
    <location>
        <position position="212"/>
    </location>
</feature>
<feature type="mutagenesis site" description="Loss of GTPase activity." evidence="6">
    <original>Q</original>
    <variation>L</variation>
    <location>
        <position position="71"/>
    </location>
</feature>
<feature type="mutagenesis site" description="Decreases GTP-binding efficiency." evidence="6">
    <original>N</original>
    <variation>I</variation>
    <location>
        <position position="125"/>
    </location>
</feature>
<name>RAA5C_ARATH</name>